<reference key="1">
    <citation type="journal article" date="2005" name="Physiol. Genomics">
        <title>Cross-species analysis of the mammalian beta-defensin gene family: presence of syntenic gene clusters and preferential expression in the male reproductive tract.</title>
        <authorList>
            <person name="Patil A.A."/>
            <person name="Cai Y."/>
            <person name="Sang Y."/>
            <person name="Blecha F."/>
            <person name="Zhang G."/>
        </authorList>
    </citation>
    <scope>NUCLEOTIDE SEQUENCE [MRNA]</scope>
</reference>
<reference key="2">
    <citation type="submission" date="2004-05" db="EMBL/GenBank/DDBJ databases">
        <title>Genome-wide analysis of rat beta-defensins: evidence for the existence of four syntenic defensin gene clusters in mammals.</title>
        <authorList>
            <person name="Patil A."/>
            <person name="Zhang G."/>
        </authorList>
    </citation>
    <scope>NUCLEOTIDE SEQUENCE [MRNA] OF 22-61</scope>
</reference>
<feature type="signal peptide" evidence="2">
    <location>
        <begin position="1"/>
        <end position="23"/>
    </location>
</feature>
<feature type="chain" id="PRO_0000045358" description="Beta-defensin 133">
    <location>
        <begin position="24"/>
        <end position="61"/>
    </location>
</feature>
<feature type="disulfide bond" evidence="1">
    <location>
        <begin position="31"/>
        <end position="59"/>
    </location>
</feature>
<feature type="disulfide bond" evidence="1">
    <location>
        <begin position="38"/>
        <end position="52"/>
    </location>
</feature>
<proteinExistence type="inferred from homology"/>
<sequence>MKIHVFLFVLFFFLVPIATRVKCAVKDTYSCFIMRGKCRHECHDFEKPIGFCTKLNANCYM</sequence>
<name>DB133_HUMAN</name>
<organism>
    <name type="scientific">Homo sapiens</name>
    <name type="common">Human</name>
    <dbReference type="NCBI Taxonomy" id="9606"/>
    <lineage>
        <taxon>Eukaryota</taxon>
        <taxon>Metazoa</taxon>
        <taxon>Chordata</taxon>
        <taxon>Craniata</taxon>
        <taxon>Vertebrata</taxon>
        <taxon>Euteleostomi</taxon>
        <taxon>Mammalia</taxon>
        <taxon>Eutheria</taxon>
        <taxon>Euarchontoglires</taxon>
        <taxon>Primates</taxon>
        <taxon>Haplorrhini</taxon>
        <taxon>Catarrhini</taxon>
        <taxon>Hominidae</taxon>
        <taxon>Homo</taxon>
    </lineage>
</organism>
<keyword id="KW-0044">Antibiotic</keyword>
<keyword id="KW-0929">Antimicrobial</keyword>
<keyword id="KW-0211">Defensin</keyword>
<keyword id="KW-1015">Disulfide bond</keyword>
<keyword id="KW-1185">Reference proteome</keyword>
<keyword id="KW-0964">Secreted</keyword>
<keyword id="KW-0732">Signal</keyword>
<evidence type="ECO:0000250" key="1"/>
<evidence type="ECO:0000255" key="2"/>
<evidence type="ECO:0000305" key="3"/>
<comment type="function">
    <text evidence="3">Has antibacterial activity.</text>
</comment>
<comment type="subcellular location">
    <subcellularLocation>
        <location evidence="3">Secreted</location>
    </subcellularLocation>
</comment>
<comment type="similarity">
    <text evidence="3">Belongs to the beta-defensin family.</text>
</comment>
<comment type="caution">
    <text evidence="3">Was termed (Ref.2) DEFB134.</text>
</comment>
<gene>
    <name type="primary">DEFB133</name>
</gene>
<dbReference type="EMBL" id="DQ012023">
    <property type="protein sequence ID" value="AAY59759.1"/>
    <property type="molecule type" value="mRNA"/>
</dbReference>
<dbReference type="EMBL" id="AY621330">
    <property type="protein sequence ID" value="AAT51869.1"/>
    <property type="molecule type" value="mRNA"/>
</dbReference>
<dbReference type="RefSeq" id="NP_001159950.1">
    <property type="nucleotide sequence ID" value="NM_001166478.1"/>
</dbReference>
<dbReference type="SMR" id="Q30KQ1"/>
<dbReference type="FunCoup" id="Q30KQ1">
    <property type="interactions" value="11"/>
</dbReference>
<dbReference type="STRING" id="9606.ENSP00000485031"/>
<dbReference type="BioMuta" id="DEFB133"/>
<dbReference type="DMDM" id="84028894"/>
<dbReference type="PaxDb" id="9606-ENSP00000485031"/>
<dbReference type="Antibodypedia" id="48482">
    <property type="antibodies" value="3 antibodies from 3 providers"/>
</dbReference>
<dbReference type="UCSC" id="uc063ozl.1">
    <property type="organism name" value="human"/>
</dbReference>
<dbReference type="AGR" id="HGNC:31331"/>
<dbReference type="GeneCards" id="DEFB133"/>
<dbReference type="HGNC" id="HGNC:31331">
    <property type="gene designation" value="DEFB133"/>
</dbReference>
<dbReference type="neXtProt" id="NX_Q30KQ1"/>
<dbReference type="PharmGKB" id="PA134862169"/>
<dbReference type="VEuPathDB" id="HostDB:ENSG00000214643"/>
<dbReference type="eggNOG" id="ENOG502TEXM">
    <property type="taxonomic scope" value="Eukaryota"/>
</dbReference>
<dbReference type="HOGENOM" id="CLU_193926_0_0_1"/>
<dbReference type="InParanoid" id="Q30KQ1"/>
<dbReference type="OMA" id="ECHDFEK"/>
<dbReference type="PAN-GO" id="Q30KQ1">
    <property type="GO annotations" value="0 GO annotations based on evolutionary models"/>
</dbReference>
<dbReference type="PhylomeDB" id="Q30KQ1"/>
<dbReference type="PathwayCommons" id="Q30KQ1"/>
<dbReference type="Reactome" id="R-HSA-1461957">
    <property type="pathway name" value="Beta defensins"/>
</dbReference>
<dbReference type="Reactome" id="R-HSA-1461973">
    <property type="pathway name" value="Defensins"/>
</dbReference>
<dbReference type="BioGRID-ORCS" id="403339">
    <property type="hits" value="5 hits in 223 CRISPR screens"/>
</dbReference>
<dbReference type="Pharos" id="Q30KQ1">
    <property type="development level" value="Tdark"/>
</dbReference>
<dbReference type="PRO" id="PR:Q30KQ1"/>
<dbReference type="Proteomes" id="UP000005640">
    <property type="component" value="Chromosome 6"/>
</dbReference>
<dbReference type="RNAct" id="Q30KQ1">
    <property type="molecule type" value="protein"/>
</dbReference>
<dbReference type="GO" id="GO:0005615">
    <property type="term" value="C:extracellular space"/>
    <property type="evidence" value="ECO:0000318"/>
    <property type="project" value="GO_Central"/>
</dbReference>
<dbReference type="GO" id="GO:0031731">
    <property type="term" value="F:CCR6 chemokine receptor binding"/>
    <property type="evidence" value="ECO:0000318"/>
    <property type="project" value="GO_Central"/>
</dbReference>
<dbReference type="GO" id="GO:0042056">
    <property type="term" value="F:chemoattractant activity"/>
    <property type="evidence" value="ECO:0000318"/>
    <property type="project" value="GO_Central"/>
</dbReference>
<dbReference type="GO" id="GO:0060326">
    <property type="term" value="P:cell chemotaxis"/>
    <property type="evidence" value="ECO:0000318"/>
    <property type="project" value="GO_Central"/>
</dbReference>
<dbReference type="GO" id="GO:0042742">
    <property type="term" value="P:defense response to bacterium"/>
    <property type="evidence" value="ECO:0000318"/>
    <property type="project" value="GO_Central"/>
</dbReference>
<dbReference type="GO" id="GO:0045087">
    <property type="term" value="P:innate immune response"/>
    <property type="evidence" value="ECO:0007669"/>
    <property type="project" value="InterPro"/>
</dbReference>
<dbReference type="InterPro" id="IPR025933">
    <property type="entry name" value="Beta_defensin_dom"/>
</dbReference>
<dbReference type="PANTHER" id="PTHR20515">
    <property type="entry name" value="BETA-DEFENSIN"/>
    <property type="match status" value="1"/>
</dbReference>
<dbReference type="PANTHER" id="PTHR20515:SF17">
    <property type="entry name" value="BETA-DEFENSIN 133"/>
    <property type="match status" value="1"/>
</dbReference>
<dbReference type="Pfam" id="PF13841">
    <property type="entry name" value="Defensin_beta_2"/>
    <property type="match status" value="1"/>
</dbReference>
<accession>Q30KQ1</accession>
<accession>Q4QY39</accession>
<protein>
    <recommendedName>
        <fullName>Beta-defensin 133</fullName>
    </recommendedName>
    <alternativeName>
        <fullName>Defensin, beta 133</fullName>
    </alternativeName>
</protein>